<comment type="function">
    <text evidence="1">Acts as an alpha-ketoglutarate-dependent dioxygenase catalyzing hydroxylation of glutarate (GA) to L-2-hydroxyglutarate (L2HG). Functions in a L-lysine degradation pathway that proceeds via cadaverine, glutarate and L-2-hydroxyglutarate.</text>
</comment>
<comment type="catalytic activity">
    <reaction evidence="1">
        <text>glutarate + 2-oxoglutarate + O2 = (S)-2-hydroxyglutarate + succinate + CO2</text>
        <dbReference type="Rhea" id="RHEA:13821"/>
        <dbReference type="ChEBI" id="CHEBI:15379"/>
        <dbReference type="ChEBI" id="CHEBI:16526"/>
        <dbReference type="ChEBI" id="CHEBI:16782"/>
        <dbReference type="ChEBI" id="CHEBI:16810"/>
        <dbReference type="ChEBI" id="CHEBI:30031"/>
        <dbReference type="ChEBI" id="CHEBI:30921"/>
        <dbReference type="EC" id="1.14.11.64"/>
    </reaction>
    <physiologicalReaction direction="left-to-right" evidence="1">
        <dbReference type="Rhea" id="RHEA:13822"/>
    </physiologicalReaction>
</comment>
<comment type="cofactor">
    <cofactor evidence="1">
        <name>Fe(2+)</name>
        <dbReference type="ChEBI" id="CHEBI:29033"/>
    </cofactor>
    <text evidence="1">Binds 1 Fe(2+) ion per subunit.</text>
</comment>
<comment type="pathway">
    <text evidence="1">Amino-acid degradation.</text>
</comment>
<comment type="subunit">
    <text evidence="1">Homotetramer.</text>
</comment>
<comment type="similarity">
    <text evidence="1">Belongs to the glutarate hydroxylase family.</text>
</comment>
<proteinExistence type="inferred from homology"/>
<sequence length="325" mass="37384">MNALTAVHNNAVDSGQDYSGFTLIPSAQSPRLLELTFTEQTTKQFLEQVAEWPVQALEYKSFLRFRVGKILDDLCANQLQPLLLKTLLNRAEGALLINAVGIDDVAQADEMVKLATAVAHLIGRSNFDAMSGQYYARFVVKNVDNSDSYLRQPHRVMELHNDGTYVEEITDYVLMMKIDEQNMQGGNSLLLHLDDWEHLDHYFRHPLARRPMRFAAPPSKNVSKDVFHPVFDVDQQGRPVMRYIDQFVQPKDFEEGVWLSELSDAIETSKGILSVPVPVGKFLLINNLFWLHGRDRFTPHPDLRRELMRQRGYFAYATHHYQTHQ</sequence>
<name>GLAH_ECOLC</name>
<organism>
    <name type="scientific">Escherichia coli (strain ATCC 8739 / DSM 1576 / NBRC 3972 / NCIMB 8545 / WDCM 00012 / Crooks)</name>
    <dbReference type="NCBI Taxonomy" id="481805"/>
    <lineage>
        <taxon>Bacteria</taxon>
        <taxon>Pseudomonadati</taxon>
        <taxon>Pseudomonadota</taxon>
        <taxon>Gammaproteobacteria</taxon>
        <taxon>Enterobacterales</taxon>
        <taxon>Enterobacteriaceae</taxon>
        <taxon>Escherichia</taxon>
    </lineage>
</organism>
<evidence type="ECO:0000255" key="1">
    <source>
        <dbReference type="HAMAP-Rule" id="MF_01083"/>
    </source>
</evidence>
<dbReference type="EC" id="1.14.11.64" evidence="1"/>
<dbReference type="EMBL" id="CP000946">
    <property type="protein sequence ID" value="ACA76716.1"/>
    <property type="molecule type" value="Genomic_DNA"/>
</dbReference>
<dbReference type="RefSeq" id="WP_000993087.1">
    <property type="nucleotide sequence ID" value="NZ_MTFT01000026.1"/>
</dbReference>
<dbReference type="SMR" id="B1IVJ9"/>
<dbReference type="KEGG" id="ecl:EcolC_1047"/>
<dbReference type="HOGENOM" id="CLU_075277_0_0_6"/>
<dbReference type="GO" id="GO:0008198">
    <property type="term" value="F:ferrous iron binding"/>
    <property type="evidence" value="ECO:0007669"/>
    <property type="project" value="UniProtKB-UniRule"/>
</dbReference>
<dbReference type="GO" id="GO:0106343">
    <property type="term" value="F:glutarate dioxygenase activity"/>
    <property type="evidence" value="ECO:0007669"/>
    <property type="project" value="UniProtKB-EC"/>
</dbReference>
<dbReference type="GO" id="GO:0050498">
    <property type="term" value="F:oxidoreductase activity, acting on paired donors, with incorporation or reduction of molecular oxygen, with 2-oxoglutarate as one donor, and the other dehydrogenated"/>
    <property type="evidence" value="ECO:0007669"/>
    <property type="project" value="UniProtKB-UniRule"/>
</dbReference>
<dbReference type="GO" id="GO:0019477">
    <property type="term" value="P:L-lysine catabolic process"/>
    <property type="evidence" value="ECO:0007669"/>
    <property type="project" value="UniProtKB-UniRule"/>
</dbReference>
<dbReference type="CDD" id="cd00250">
    <property type="entry name" value="CAS_like"/>
    <property type="match status" value="1"/>
</dbReference>
<dbReference type="FunFam" id="3.60.130.10:FF:000004">
    <property type="entry name" value="Glutarate 2-hydroxylase"/>
    <property type="match status" value="1"/>
</dbReference>
<dbReference type="Gene3D" id="3.60.130.10">
    <property type="entry name" value="Clavaminate synthase-like"/>
    <property type="match status" value="1"/>
</dbReference>
<dbReference type="HAMAP" id="MF_01083">
    <property type="entry name" value="glutarate_hydroxylase"/>
    <property type="match status" value="1"/>
</dbReference>
<dbReference type="InterPro" id="IPR015038">
    <property type="entry name" value="GlaH"/>
</dbReference>
<dbReference type="InterPro" id="IPR042098">
    <property type="entry name" value="TauD-like_sf"/>
</dbReference>
<dbReference type="NCBIfam" id="NF002814">
    <property type="entry name" value="PRK02963.1"/>
    <property type="match status" value="1"/>
</dbReference>
<dbReference type="Pfam" id="PF08943">
    <property type="entry name" value="CsiD"/>
    <property type="match status" value="1"/>
</dbReference>
<dbReference type="SUPFAM" id="SSF51197">
    <property type="entry name" value="Clavaminate synthase-like"/>
    <property type="match status" value="1"/>
</dbReference>
<gene>
    <name evidence="1" type="primary">glaH</name>
    <name type="ordered locus">EcolC_1047</name>
</gene>
<keyword id="KW-0223">Dioxygenase</keyword>
<keyword id="KW-0408">Iron</keyword>
<keyword id="KW-0479">Metal-binding</keyword>
<keyword id="KW-0560">Oxidoreductase</keyword>
<accession>B1IVJ9</accession>
<feature type="chain" id="PRO_1000084774" description="Glutarate 2-hydroxylase">
    <location>
        <begin position="1"/>
        <end position="325"/>
    </location>
</feature>
<feature type="binding site" evidence="1">
    <location>
        <position position="160"/>
    </location>
    <ligand>
        <name>Fe cation</name>
        <dbReference type="ChEBI" id="CHEBI:24875"/>
    </ligand>
</feature>
<feature type="binding site" evidence="1">
    <location>
        <position position="162"/>
    </location>
    <ligand>
        <name>Fe cation</name>
        <dbReference type="ChEBI" id="CHEBI:24875"/>
    </ligand>
</feature>
<feature type="binding site" evidence="1">
    <location>
        <position position="292"/>
    </location>
    <ligand>
        <name>Fe cation</name>
        <dbReference type="ChEBI" id="CHEBI:24875"/>
    </ligand>
</feature>
<reference key="1">
    <citation type="submission" date="2008-02" db="EMBL/GenBank/DDBJ databases">
        <title>Complete sequence of Escherichia coli C str. ATCC 8739.</title>
        <authorList>
            <person name="Copeland A."/>
            <person name="Lucas S."/>
            <person name="Lapidus A."/>
            <person name="Glavina del Rio T."/>
            <person name="Dalin E."/>
            <person name="Tice H."/>
            <person name="Bruce D."/>
            <person name="Goodwin L."/>
            <person name="Pitluck S."/>
            <person name="Kiss H."/>
            <person name="Brettin T."/>
            <person name="Detter J.C."/>
            <person name="Han C."/>
            <person name="Kuske C.R."/>
            <person name="Schmutz J."/>
            <person name="Larimer F."/>
            <person name="Land M."/>
            <person name="Hauser L."/>
            <person name="Kyrpides N."/>
            <person name="Mikhailova N."/>
            <person name="Ingram L."/>
            <person name="Richardson P."/>
        </authorList>
    </citation>
    <scope>NUCLEOTIDE SEQUENCE [LARGE SCALE GENOMIC DNA]</scope>
    <source>
        <strain>ATCC 8739 / DSM 1576 / NBRC 3972 / NCIMB 8545 / WDCM 00012 / Crooks</strain>
    </source>
</reference>
<protein>
    <recommendedName>
        <fullName evidence="1">Glutarate 2-hydroxylase</fullName>
        <shortName evidence="1">G-2-H</shortName>
        <ecNumber evidence="1">1.14.11.64</ecNumber>
    </recommendedName>
</protein>